<comment type="catalytic activity">
    <reaction evidence="2">
        <text>O-phospho-L-tyrosyl-[protein] + H2O = L-tyrosyl-[protein] + phosphate</text>
        <dbReference type="Rhea" id="RHEA:10684"/>
        <dbReference type="Rhea" id="RHEA-COMP:10136"/>
        <dbReference type="Rhea" id="RHEA-COMP:20101"/>
        <dbReference type="ChEBI" id="CHEBI:15377"/>
        <dbReference type="ChEBI" id="CHEBI:43474"/>
        <dbReference type="ChEBI" id="CHEBI:46858"/>
        <dbReference type="ChEBI" id="CHEBI:61978"/>
        <dbReference type="EC" id="3.1.3.48"/>
    </reaction>
</comment>
<comment type="similarity">
    <text evidence="3">Belongs to the protein-tyrosine phosphatase family.</text>
</comment>
<feature type="chain" id="PRO_0000376959" description="Putative tyrosine phosphatase 067L">
    <location>
        <begin position="1"/>
        <end position="240"/>
    </location>
</feature>
<feature type="domain" description="Tyrosine-protein phosphatase" evidence="1">
    <location>
        <begin position="3"/>
        <end position="151"/>
    </location>
</feature>
<feature type="active site" description="Phosphocysteine intermediate" evidence="1">
    <location>
        <position position="96"/>
    </location>
</feature>
<organismHost>
    <name type="scientific">Aedes vexans</name>
    <name type="common">Inland floodwater mosquito</name>
    <name type="synonym">Culex vexans</name>
    <dbReference type="NCBI Taxonomy" id="7163"/>
</organismHost>
<organismHost>
    <name type="scientific">Culex territans</name>
    <dbReference type="NCBI Taxonomy" id="42431"/>
</organismHost>
<organismHost>
    <name type="scientific">Culiseta annulata</name>
    <dbReference type="NCBI Taxonomy" id="332058"/>
</organismHost>
<organismHost>
    <name type="scientific">Ochlerotatus sollicitans</name>
    <name type="common">eastern saltmarsh mosquito</name>
    <dbReference type="NCBI Taxonomy" id="310513"/>
</organismHost>
<organismHost>
    <name type="scientific">Ochlerotatus taeniorhynchus</name>
    <name type="common">Black salt marsh mosquito</name>
    <name type="synonym">Aedes taeniorhynchus</name>
    <dbReference type="NCBI Taxonomy" id="329105"/>
</organismHost>
<organismHost>
    <name type="scientific">Psorophora ferox</name>
    <dbReference type="NCBI Taxonomy" id="7183"/>
</organismHost>
<dbReference type="EC" id="3.1.3.48" evidence="2"/>
<dbReference type="EMBL" id="DQ643392">
    <property type="protein sequence ID" value="ABF82097.1"/>
    <property type="molecule type" value="Genomic_DNA"/>
</dbReference>
<dbReference type="RefSeq" id="YP_654639.1">
    <property type="nucleotide sequence ID" value="NC_008187.1"/>
</dbReference>
<dbReference type="SMR" id="Q196Z3"/>
<dbReference type="KEGG" id="vg:4156278"/>
<dbReference type="OrthoDB" id="11806at10239"/>
<dbReference type="Proteomes" id="UP000001358">
    <property type="component" value="Genome"/>
</dbReference>
<dbReference type="GO" id="GO:0004725">
    <property type="term" value="F:protein tyrosine phosphatase activity"/>
    <property type="evidence" value="ECO:0007669"/>
    <property type="project" value="RHEA"/>
</dbReference>
<dbReference type="Gene3D" id="3.90.190.10">
    <property type="entry name" value="Protein tyrosine phosphatase superfamily"/>
    <property type="match status" value="1"/>
</dbReference>
<dbReference type="InterPro" id="IPR029021">
    <property type="entry name" value="Prot-tyrosine_phosphatase-like"/>
</dbReference>
<dbReference type="InterPro" id="IPR057023">
    <property type="entry name" value="PTP-SAK"/>
</dbReference>
<dbReference type="InterPro" id="IPR016130">
    <property type="entry name" value="Tyr_Pase_AS"/>
</dbReference>
<dbReference type="InterPro" id="IPR000387">
    <property type="entry name" value="Tyr_Pase_dom"/>
</dbReference>
<dbReference type="InterPro" id="IPR020422">
    <property type="entry name" value="TYR_PHOSPHATASE_DUAL_dom"/>
</dbReference>
<dbReference type="Pfam" id="PF22784">
    <property type="entry name" value="PTP-SAK"/>
    <property type="match status" value="1"/>
</dbReference>
<dbReference type="SUPFAM" id="SSF52799">
    <property type="entry name" value="(Phosphotyrosine protein) phosphatases II"/>
    <property type="match status" value="1"/>
</dbReference>
<dbReference type="PROSITE" id="PS00383">
    <property type="entry name" value="TYR_PHOSPHATASE_1"/>
    <property type="match status" value="1"/>
</dbReference>
<dbReference type="PROSITE" id="PS50056">
    <property type="entry name" value="TYR_PHOSPHATASE_2"/>
    <property type="match status" value="1"/>
</dbReference>
<dbReference type="PROSITE" id="PS50054">
    <property type="entry name" value="TYR_PHOSPHATASE_DUAL"/>
    <property type="match status" value="1"/>
</dbReference>
<evidence type="ECO:0000255" key="1">
    <source>
        <dbReference type="PROSITE-ProRule" id="PRU00160"/>
    </source>
</evidence>
<evidence type="ECO:0000255" key="2">
    <source>
        <dbReference type="PROSITE-ProRule" id="PRU10044"/>
    </source>
</evidence>
<evidence type="ECO:0000305" key="3"/>
<keyword id="KW-0378">Hydrolase</keyword>
<keyword id="KW-0904">Protein phosphatase</keyword>
<keyword id="KW-1185">Reference proteome</keyword>
<accession>Q196Z3</accession>
<gene>
    <name type="ORF">IIV3-067L</name>
</gene>
<organism>
    <name type="scientific">Invertebrate iridescent virus 3</name>
    <name type="common">IIV-3</name>
    <name type="synonym">Mosquito iridescent virus</name>
    <dbReference type="NCBI Taxonomy" id="345201"/>
    <lineage>
        <taxon>Viruses</taxon>
        <taxon>Varidnaviria</taxon>
        <taxon>Bamfordvirae</taxon>
        <taxon>Nucleocytoviricota</taxon>
        <taxon>Megaviricetes</taxon>
        <taxon>Pimascovirales</taxon>
        <taxon>Iridoviridae</taxon>
        <taxon>Betairidovirinae</taxon>
        <taxon>Chloriridovirus</taxon>
    </lineage>
</organism>
<protein>
    <recommendedName>
        <fullName>Putative tyrosine phosphatase 067L</fullName>
        <ecNumber evidence="2">3.1.3.48</ecNumber>
    </recommendedName>
</protein>
<reference key="1">
    <citation type="journal article" date="2006" name="J. Virol.">
        <title>Genome of invertebrate iridescent virus type 3 (mosquito iridescent virus).</title>
        <authorList>
            <person name="Delhon G."/>
            <person name="Tulman E.R."/>
            <person name="Afonso C.L."/>
            <person name="Lu Z."/>
            <person name="Becnel J.J."/>
            <person name="Moser B.A."/>
            <person name="Kutish G.F."/>
            <person name="Rock D.L."/>
        </authorList>
    </citation>
    <scope>NUCLEOTIDE SEQUENCE [LARGE SCALE GENOMIC DNA]</scope>
</reference>
<proteinExistence type="inferred from homology"/>
<name>VF197_IIV3</name>
<sequence length="240" mass="27556">MNQASFFVADKAIFGGYPSWEQVQELQTAGVVWFVDLTEECEKNVVLYHQLVPNWINYPIKDGGTPQNREKFLTFLLAVQILVDGLGPGEKIYLHCRGGHGRSGLVIACFLAMTLNISPKKSLFLVKLYHSQRPNLVNTRWEREWPLNPTQKRFVQKFFGTFLLRSGFEAENTSAYKKSDHVWYFVRINVWLHQNPQLLAVVLNSGLKTIKGEGPVSKILQQLRYYILFSKAKKLVDCCS</sequence>